<proteinExistence type="inferred from homology"/>
<evidence type="ECO:0000255" key="1">
    <source>
        <dbReference type="HAMAP-Rule" id="MF_03157"/>
    </source>
</evidence>
<sequence>MGAWRNTRFIRSLSSVKRYRARFSYYSLFGGEPRACMAEKRSRSPLPAQRQIHVHNRQQEAQLLQSAKNVIPSLEETFHKGVAGRIGVIGGCQEYTGAPYFAAISALKTGADLSHVFCTSDSASVIKSYSPELIVHPLLDRTFAVNEISEWLSRLHCLVVGPGLGRNPTNLENAKRTIEKARKNKKHLVIDADGIAVVTTYPEIIKNYDSKKSKVILTPNVVEFDRLYTSVMGKAADPHGDSYEQARSLSQELGNVTICRKGQHDIITDGQTVVECSITGSNRRCGGQGDLLSGSMAVFLHWANIEVTQNPALVAAYAASGLTRWCNRLAYSRLKRSMTTSDMIQQIHQAFEELFGKE</sequence>
<feature type="chain" id="PRO_0000416169" description="ATP-dependent (S)-NAD(P)H-hydrate dehydratase">
    <location>
        <begin position="1"/>
        <end position="358"/>
    </location>
</feature>
<feature type="domain" description="YjeF C-terminal" evidence="1">
    <location>
        <begin position="63"/>
        <end position="354"/>
    </location>
</feature>
<feature type="binding site" evidence="1">
    <location>
        <position position="163"/>
    </location>
    <ligand>
        <name>(6S)-NADPHX</name>
        <dbReference type="ChEBI" id="CHEBI:64076"/>
    </ligand>
</feature>
<feature type="binding site" evidence="1">
    <location>
        <begin position="220"/>
        <end position="226"/>
    </location>
    <ligand>
        <name>(6S)-NADPHX</name>
        <dbReference type="ChEBI" id="CHEBI:64076"/>
    </ligand>
</feature>
<feature type="binding site" evidence="1">
    <location>
        <begin position="261"/>
        <end position="265"/>
    </location>
    <ligand>
        <name>ATP</name>
        <dbReference type="ChEBI" id="CHEBI:30616"/>
    </ligand>
</feature>
<feature type="binding site" evidence="1">
    <location>
        <begin position="280"/>
        <end position="289"/>
    </location>
    <ligand>
        <name>ATP</name>
        <dbReference type="ChEBI" id="CHEBI:30616"/>
    </ligand>
</feature>
<feature type="binding site" evidence="1">
    <location>
        <position position="290"/>
    </location>
    <ligand>
        <name>(6S)-NADPHX</name>
        <dbReference type="ChEBI" id="CHEBI:64076"/>
    </ligand>
</feature>
<protein>
    <recommendedName>
        <fullName evidence="1">ATP-dependent (S)-NAD(P)H-hydrate dehydratase</fullName>
        <ecNumber evidence="1">4.2.1.93</ecNumber>
    </recommendedName>
    <alternativeName>
        <fullName evidence="1">ATP-dependent NAD(P)HX dehydratase</fullName>
    </alternativeName>
</protein>
<comment type="function">
    <text evidence="1">Catalyzes the dehydration of the S-form of NAD(P)HX at the expense of ATP, which is converted to ADP. Together with NAD(P)HX epimerase, which catalyzes the epimerization of the S- and R-forms, the enzyme allows the repair of both epimers of NAD(P)HX, a damaged form of NAD(P)H that is a result of enzymatic or heat-dependent hydration.</text>
</comment>
<comment type="catalytic activity">
    <reaction evidence="1">
        <text>(6S)-NADHX + ATP = ADP + phosphate + NADH + H(+)</text>
        <dbReference type="Rhea" id="RHEA:19017"/>
        <dbReference type="ChEBI" id="CHEBI:15378"/>
        <dbReference type="ChEBI" id="CHEBI:30616"/>
        <dbReference type="ChEBI" id="CHEBI:43474"/>
        <dbReference type="ChEBI" id="CHEBI:57945"/>
        <dbReference type="ChEBI" id="CHEBI:64074"/>
        <dbReference type="ChEBI" id="CHEBI:456216"/>
        <dbReference type="EC" id="4.2.1.93"/>
    </reaction>
</comment>
<comment type="catalytic activity">
    <reaction>
        <text>(6S)-NADPHX + ATP = ADP + phosphate + NADPH + H(+)</text>
        <dbReference type="Rhea" id="RHEA:32231"/>
        <dbReference type="ChEBI" id="CHEBI:15378"/>
        <dbReference type="ChEBI" id="CHEBI:30616"/>
        <dbReference type="ChEBI" id="CHEBI:43474"/>
        <dbReference type="ChEBI" id="CHEBI:57783"/>
        <dbReference type="ChEBI" id="CHEBI:64076"/>
        <dbReference type="ChEBI" id="CHEBI:456216"/>
        <dbReference type="EC" id="4.2.1.93"/>
    </reaction>
</comment>
<comment type="cofactor">
    <cofactor evidence="1">
        <name>Mg(2+)</name>
        <dbReference type="ChEBI" id="CHEBI:18420"/>
    </cofactor>
</comment>
<comment type="similarity">
    <text evidence="1">Belongs to the NnrD/CARKD family.</text>
</comment>
<reference key="1">
    <citation type="journal article" date="2007" name="Science">
        <title>Sea anemone genome reveals ancestral eumetazoan gene repertoire and genomic organization.</title>
        <authorList>
            <person name="Putnam N.H."/>
            <person name="Srivastava M."/>
            <person name="Hellsten U."/>
            <person name="Dirks B."/>
            <person name="Chapman J."/>
            <person name="Salamov A."/>
            <person name="Terry A."/>
            <person name="Shapiro H."/>
            <person name="Lindquist E."/>
            <person name="Kapitonov V.V."/>
            <person name="Jurka J."/>
            <person name="Genikhovich G."/>
            <person name="Grigoriev I.V."/>
            <person name="Lucas S.M."/>
            <person name="Steele R.E."/>
            <person name="Finnerty J.R."/>
            <person name="Technau U."/>
            <person name="Martindale M.Q."/>
            <person name="Rokhsar D.S."/>
        </authorList>
    </citation>
    <scope>NUCLEOTIDE SEQUENCE [LARGE SCALE GENOMIC DNA]</scope>
    <source>
        <strain>CH2 X CH6</strain>
    </source>
</reference>
<keyword id="KW-0067">ATP-binding</keyword>
<keyword id="KW-0456">Lyase</keyword>
<keyword id="KW-0520">NAD</keyword>
<keyword id="KW-0521">NADP</keyword>
<keyword id="KW-0547">Nucleotide-binding</keyword>
<keyword id="KW-0597">Phosphoprotein</keyword>
<keyword id="KW-1185">Reference proteome</keyword>
<organism>
    <name type="scientific">Nematostella vectensis</name>
    <name type="common">Starlet sea anemone</name>
    <dbReference type="NCBI Taxonomy" id="45351"/>
    <lineage>
        <taxon>Eukaryota</taxon>
        <taxon>Metazoa</taxon>
        <taxon>Cnidaria</taxon>
        <taxon>Anthozoa</taxon>
        <taxon>Hexacorallia</taxon>
        <taxon>Actiniaria</taxon>
        <taxon>Edwardsiidae</taxon>
        <taxon>Nematostella</taxon>
    </lineage>
</organism>
<gene>
    <name type="ORF">v1g162096</name>
</gene>
<dbReference type="EC" id="4.2.1.93" evidence="1"/>
<dbReference type="EMBL" id="DS469533">
    <property type="protein sequence ID" value="EDO45663.1"/>
    <property type="molecule type" value="Genomic_DNA"/>
</dbReference>
<dbReference type="RefSeq" id="XP_001637726.1">
    <property type="nucleotide sequence ID" value="XM_001637676.1"/>
</dbReference>
<dbReference type="SMR" id="A7RRZ8"/>
<dbReference type="STRING" id="45351.A7RRZ8"/>
<dbReference type="EnsemblMetazoa" id="EDO45663">
    <property type="protein sequence ID" value="EDO45663"/>
    <property type="gene ID" value="NEMVEDRAFT_v1g162096"/>
</dbReference>
<dbReference type="eggNOG" id="KOG3974">
    <property type="taxonomic scope" value="Eukaryota"/>
</dbReference>
<dbReference type="HOGENOM" id="CLU_030651_3_0_1"/>
<dbReference type="InParanoid" id="A7RRZ8"/>
<dbReference type="OMA" id="WRAAYHN"/>
<dbReference type="PhylomeDB" id="A7RRZ8"/>
<dbReference type="Proteomes" id="UP000001593">
    <property type="component" value="Unassembled WGS sequence"/>
</dbReference>
<dbReference type="GO" id="GO:0005524">
    <property type="term" value="F:ATP binding"/>
    <property type="evidence" value="ECO:0007669"/>
    <property type="project" value="UniProtKB-KW"/>
</dbReference>
<dbReference type="GO" id="GO:0047453">
    <property type="term" value="F:ATP-dependent NAD(P)H-hydrate dehydratase activity"/>
    <property type="evidence" value="ECO:0000318"/>
    <property type="project" value="GO_Central"/>
</dbReference>
<dbReference type="GO" id="GO:0110051">
    <property type="term" value="P:metabolite repair"/>
    <property type="evidence" value="ECO:0000318"/>
    <property type="project" value="GO_Central"/>
</dbReference>
<dbReference type="GO" id="GO:0046496">
    <property type="term" value="P:nicotinamide nucleotide metabolic process"/>
    <property type="evidence" value="ECO:0007669"/>
    <property type="project" value="UniProtKB-UniRule"/>
</dbReference>
<dbReference type="CDD" id="cd01171">
    <property type="entry name" value="YXKO-related"/>
    <property type="match status" value="1"/>
</dbReference>
<dbReference type="FunFam" id="3.40.1190.20:FF:000028">
    <property type="entry name" value="ATP-dependent (S)-NAD(P)H-hydrate dehydratase"/>
    <property type="match status" value="1"/>
</dbReference>
<dbReference type="Gene3D" id="3.40.1190.20">
    <property type="match status" value="1"/>
</dbReference>
<dbReference type="HAMAP" id="MF_01965">
    <property type="entry name" value="NADHX_dehydratase"/>
    <property type="match status" value="1"/>
</dbReference>
<dbReference type="InterPro" id="IPR000631">
    <property type="entry name" value="CARKD"/>
</dbReference>
<dbReference type="InterPro" id="IPR029056">
    <property type="entry name" value="Ribokinase-like"/>
</dbReference>
<dbReference type="NCBIfam" id="TIGR00196">
    <property type="entry name" value="yjeF_cterm"/>
    <property type="match status" value="1"/>
</dbReference>
<dbReference type="PANTHER" id="PTHR12592:SF0">
    <property type="entry name" value="ATP-DEPENDENT (S)-NAD(P)H-HYDRATE DEHYDRATASE"/>
    <property type="match status" value="1"/>
</dbReference>
<dbReference type="PANTHER" id="PTHR12592">
    <property type="entry name" value="ATP-DEPENDENT (S)-NAD(P)H-HYDRATE DEHYDRATASE FAMILY MEMBER"/>
    <property type="match status" value="1"/>
</dbReference>
<dbReference type="Pfam" id="PF01256">
    <property type="entry name" value="Carb_kinase"/>
    <property type="match status" value="1"/>
</dbReference>
<dbReference type="SUPFAM" id="SSF53613">
    <property type="entry name" value="Ribokinase-like"/>
    <property type="match status" value="1"/>
</dbReference>
<dbReference type="PROSITE" id="PS51383">
    <property type="entry name" value="YJEF_C_3"/>
    <property type="match status" value="1"/>
</dbReference>
<name>NNRD_NEMVE</name>
<accession>A7RRZ8</accession>